<feature type="chain" id="PRO_0000061709" description="Cytochrome b">
    <location>
        <begin position="1"/>
        <end position="379"/>
    </location>
</feature>
<feature type="transmembrane region" description="Helical" evidence="2">
    <location>
        <begin position="33"/>
        <end position="53"/>
    </location>
</feature>
<feature type="transmembrane region" description="Helical" evidence="2">
    <location>
        <begin position="77"/>
        <end position="98"/>
    </location>
</feature>
<feature type="transmembrane region" description="Helical" evidence="2">
    <location>
        <begin position="113"/>
        <end position="133"/>
    </location>
</feature>
<feature type="transmembrane region" description="Helical" evidence="2">
    <location>
        <begin position="178"/>
        <end position="198"/>
    </location>
</feature>
<feature type="transmembrane region" description="Helical" evidence="2">
    <location>
        <begin position="226"/>
        <end position="246"/>
    </location>
</feature>
<feature type="transmembrane region" description="Helical" evidence="2">
    <location>
        <begin position="288"/>
        <end position="308"/>
    </location>
</feature>
<feature type="transmembrane region" description="Helical" evidence="2">
    <location>
        <begin position="320"/>
        <end position="340"/>
    </location>
</feature>
<feature type="transmembrane region" description="Helical" evidence="2">
    <location>
        <begin position="347"/>
        <end position="367"/>
    </location>
</feature>
<feature type="binding site" description="axial binding residue" evidence="2">
    <location>
        <position position="83"/>
    </location>
    <ligand>
        <name>heme b</name>
        <dbReference type="ChEBI" id="CHEBI:60344"/>
        <label>b562</label>
    </ligand>
    <ligandPart>
        <name>Fe</name>
        <dbReference type="ChEBI" id="CHEBI:18248"/>
    </ligandPart>
</feature>
<feature type="binding site" description="axial binding residue" evidence="2">
    <location>
        <position position="97"/>
    </location>
    <ligand>
        <name>heme b</name>
        <dbReference type="ChEBI" id="CHEBI:60344"/>
        <label>b566</label>
    </ligand>
    <ligandPart>
        <name>Fe</name>
        <dbReference type="ChEBI" id="CHEBI:18248"/>
    </ligandPart>
</feature>
<feature type="binding site" description="axial binding residue" evidence="2">
    <location>
        <position position="182"/>
    </location>
    <ligand>
        <name>heme b</name>
        <dbReference type="ChEBI" id="CHEBI:60344"/>
        <label>b562</label>
    </ligand>
    <ligandPart>
        <name>Fe</name>
        <dbReference type="ChEBI" id="CHEBI:18248"/>
    </ligandPart>
</feature>
<feature type="binding site" description="axial binding residue" evidence="2">
    <location>
        <position position="196"/>
    </location>
    <ligand>
        <name>heme b</name>
        <dbReference type="ChEBI" id="CHEBI:60344"/>
        <label>b566</label>
    </ligand>
    <ligandPart>
        <name>Fe</name>
        <dbReference type="ChEBI" id="CHEBI:18248"/>
    </ligandPart>
</feature>
<feature type="binding site" evidence="2">
    <location>
        <position position="201"/>
    </location>
    <ligand>
        <name>a ubiquinone</name>
        <dbReference type="ChEBI" id="CHEBI:16389"/>
    </ligand>
</feature>
<dbReference type="EMBL" id="AY157043">
    <property type="protein sequence ID" value="AAO16539.1"/>
    <property type="molecule type" value="Genomic_DNA"/>
</dbReference>
<dbReference type="SMR" id="Q6YDK7"/>
<dbReference type="GO" id="GO:0005743">
    <property type="term" value="C:mitochondrial inner membrane"/>
    <property type="evidence" value="ECO:0007669"/>
    <property type="project" value="UniProtKB-SubCell"/>
</dbReference>
<dbReference type="GO" id="GO:0045275">
    <property type="term" value="C:respiratory chain complex III"/>
    <property type="evidence" value="ECO:0007669"/>
    <property type="project" value="InterPro"/>
</dbReference>
<dbReference type="GO" id="GO:0046872">
    <property type="term" value="F:metal ion binding"/>
    <property type="evidence" value="ECO:0007669"/>
    <property type="project" value="UniProtKB-KW"/>
</dbReference>
<dbReference type="GO" id="GO:0008121">
    <property type="term" value="F:ubiquinol-cytochrome-c reductase activity"/>
    <property type="evidence" value="ECO:0007669"/>
    <property type="project" value="InterPro"/>
</dbReference>
<dbReference type="GO" id="GO:0006122">
    <property type="term" value="P:mitochondrial electron transport, ubiquinol to cytochrome c"/>
    <property type="evidence" value="ECO:0007669"/>
    <property type="project" value="TreeGrafter"/>
</dbReference>
<dbReference type="CDD" id="cd00290">
    <property type="entry name" value="cytochrome_b_C"/>
    <property type="match status" value="1"/>
</dbReference>
<dbReference type="CDD" id="cd00284">
    <property type="entry name" value="Cytochrome_b_N"/>
    <property type="match status" value="1"/>
</dbReference>
<dbReference type="FunFam" id="1.20.810.10:FF:000002">
    <property type="entry name" value="Cytochrome b"/>
    <property type="match status" value="1"/>
</dbReference>
<dbReference type="Gene3D" id="1.20.810.10">
    <property type="entry name" value="Cytochrome Bc1 Complex, Chain C"/>
    <property type="match status" value="1"/>
</dbReference>
<dbReference type="InterPro" id="IPR005798">
    <property type="entry name" value="Cyt_b/b6_C"/>
</dbReference>
<dbReference type="InterPro" id="IPR036150">
    <property type="entry name" value="Cyt_b/b6_C_sf"/>
</dbReference>
<dbReference type="InterPro" id="IPR005797">
    <property type="entry name" value="Cyt_b/b6_N"/>
</dbReference>
<dbReference type="InterPro" id="IPR027387">
    <property type="entry name" value="Cytb/b6-like_sf"/>
</dbReference>
<dbReference type="InterPro" id="IPR030689">
    <property type="entry name" value="Cytochrome_b"/>
</dbReference>
<dbReference type="InterPro" id="IPR048260">
    <property type="entry name" value="Cytochrome_b_C_euk/bac"/>
</dbReference>
<dbReference type="InterPro" id="IPR048259">
    <property type="entry name" value="Cytochrome_b_N_euk/bac"/>
</dbReference>
<dbReference type="InterPro" id="IPR016174">
    <property type="entry name" value="Di-haem_cyt_TM"/>
</dbReference>
<dbReference type="PANTHER" id="PTHR19271">
    <property type="entry name" value="CYTOCHROME B"/>
    <property type="match status" value="1"/>
</dbReference>
<dbReference type="PANTHER" id="PTHR19271:SF16">
    <property type="entry name" value="CYTOCHROME B"/>
    <property type="match status" value="1"/>
</dbReference>
<dbReference type="Pfam" id="PF00032">
    <property type="entry name" value="Cytochrom_B_C"/>
    <property type="match status" value="1"/>
</dbReference>
<dbReference type="Pfam" id="PF00033">
    <property type="entry name" value="Cytochrome_B"/>
    <property type="match status" value="1"/>
</dbReference>
<dbReference type="PIRSF" id="PIRSF038885">
    <property type="entry name" value="COB"/>
    <property type="match status" value="1"/>
</dbReference>
<dbReference type="SUPFAM" id="SSF81648">
    <property type="entry name" value="a domain/subunit of cytochrome bc1 complex (Ubiquinol-cytochrome c reductase)"/>
    <property type="match status" value="1"/>
</dbReference>
<dbReference type="SUPFAM" id="SSF81342">
    <property type="entry name" value="Transmembrane di-heme cytochromes"/>
    <property type="match status" value="1"/>
</dbReference>
<dbReference type="PROSITE" id="PS51003">
    <property type="entry name" value="CYTB_CTER"/>
    <property type="match status" value="1"/>
</dbReference>
<dbReference type="PROSITE" id="PS51002">
    <property type="entry name" value="CYTB_NTER"/>
    <property type="match status" value="1"/>
</dbReference>
<protein>
    <recommendedName>
        <fullName>Cytochrome b</fullName>
    </recommendedName>
    <alternativeName>
        <fullName>Complex III subunit 3</fullName>
    </alternativeName>
    <alternativeName>
        <fullName>Complex III subunit III</fullName>
    </alternativeName>
    <alternativeName>
        <fullName>Cytochrome b-c1 complex subunit 3</fullName>
    </alternativeName>
    <alternativeName>
        <fullName>Ubiquinol-cytochrome-c reductase complex cytochrome b subunit</fullName>
    </alternativeName>
</protein>
<proteinExistence type="inferred from homology"/>
<gene>
    <name type="primary">MT-CYB</name>
    <name type="synonym">COB</name>
    <name type="synonym">CYTB</name>
    <name type="synonym">MTCYB</name>
</gene>
<sequence length="379" mass="42688">MTNIRKTHPLLKIINSSFVDLPAPSSLSSWWNFGSLLGVCLGVQILTGLFLAMHYTSDTATAFNSVTHICRDVNYGWLLRYLHANGASMFFICLYLHVGRGLYYGSYTYSETWNVGILLLFAVMATAFMGYVLPWGQMSFWGATVITNLLSAIPYIGTELVQWIWGGFSVDKATLTRFFAFHFLLPFIITALVMVHLLFLHETGSNNPTGIPSDPDMIPFHPYYTIKDILGFLIMLTALSALVLFSPDLLGDPDNYIPANPLNTPPHIKPEWYFLFAYAILRSIPNKLGGVLALVMSILILAIIPILHMSKQRSMMFRPLSQCLFWLLVAVLFTLTWIGGQPVEYPYIIIGQTASVLYFLIILVLMPAVSLMENYLLKW</sequence>
<organism>
    <name type="scientific">Vampyressa brocki</name>
    <name type="common">Brock's yellow-eared bat</name>
    <dbReference type="NCBI Taxonomy" id="196701"/>
    <lineage>
        <taxon>Eukaryota</taxon>
        <taxon>Metazoa</taxon>
        <taxon>Chordata</taxon>
        <taxon>Craniata</taxon>
        <taxon>Vertebrata</taxon>
        <taxon>Euteleostomi</taxon>
        <taxon>Mammalia</taxon>
        <taxon>Eutheria</taxon>
        <taxon>Laurasiatheria</taxon>
        <taxon>Chiroptera</taxon>
        <taxon>Yangochiroptera</taxon>
        <taxon>Phyllostomidae</taxon>
        <taxon>Stenodermatinae</taxon>
        <taxon>Vampyressa</taxon>
    </lineage>
</organism>
<accession>Q6YDK7</accession>
<geneLocation type="mitochondrion"/>
<comment type="function">
    <text evidence="2">Component of the ubiquinol-cytochrome c reductase complex (complex III or cytochrome b-c1 complex) that is part of the mitochondrial respiratory chain. The b-c1 complex mediates electron transfer from ubiquinol to cytochrome c. Contributes to the generation of a proton gradient across the mitochondrial membrane that is then used for ATP synthesis.</text>
</comment>
<comment type="cofactor">
    <cofactor evidence="2">
        <name>heme b</name>
        <dbReference type="ChEBI" id="CHEBI:60344"/>
    </cofactor>
    <text evidence="2">Binds 2 heme b groups non-covalently.</text>
</comment>
<comment type="subunit">
    <text evidence="2">The cytochrome bc1 complex contains 11 subunits: 3 respiratory subunits (MT-CYB, CYC1 and UQCRFS1), 2 core proteins (UQCRC1 and UQCRC2) and 6 low-molecular weight proteins (UQCRH/QCR6, UQCRB/QCR7, UQCRQ/QCR8, UQCR10/QCR9, UQCR11/QCR10 and a cleavage product of UQCRFS1). This cytochrome bc1 complex then forms a dimer.</text>
</comment>
<comment type="subcellular location">
    <subcellularLocation>
        <location evidence="2">Mitochondrion inner membrane</location>
        <topology evidence="2">Multi-pass membrane protein</topology>
    </subcellularLocation>
</comment>
<comment type="miscellaneous">
    <text evidence="1">Heme 1 (or BL or b562) is low-potential and absorbs at about 562 nm, and heme 2 (or BH or b566) is high-potential and absorbs at about 566 nm.</text>
</comment>
<comment type="similarity">
    <text evidence="3 4">Belongs to the cytochrome b family.</text>
</comment>
<comment type="caution">
    <text evidence="2">The full-length protein contains only eight transmembrane helices, not nine as predicted by bioinformatics tools.</text>
</comment>
<keyword id="KW-0249">Electron transport</keyword>
<keyword id="KW-0349">Heme</keyword>
<keyword id="KW-0408">Iron</keyword>
<keyword id="KW-0472">Membrane</keyword>
<keyword id="KW-0479">Metal-binding</keyword>
<keyword id="KW-0496">Mitochondrion</keyword>
<keyword id="KW-0999">Mitochondrion inner membrane</keyword>
<keyword id="KW-0679">Respiratory chain</keyword>
<keyword id="KW-0812">Transmembrane</keyword>
<keyword id="KW-1133">Transmembrane helix</keyword>
<keyword id="KW-0813">Transport</keyword>
<keyword id="KW-0830">Ubiquinone</keyword>
<evidence type="ECO:0000250" key="1"/>
<evidence type="ECO:0000250" key="2">
    <source>
        <dbReference type="UniProtKB" id="P00157"/>
    </source>
</evidence>
<evidence type="ECO:0000255" key="3">
    <source>
        <dbReference type="PROSITE-ProRule" id="PRU00967"/>
    </source>
</evidence>
<evidence type="ECO:0000255" key="4">
    <source>
        <dbReference type="PROSITE-ProRule" id="PRU00968"/>
    </source>
</evidence>
<reference key="1">
    <citation type="journal article" date="2004" name="J. Mammal.">
        <title>Systematics of Vampyressa and related genera of phyllostomid bats as determined by cytochrome-b sequences.</title>
        <authorList>
            <person name="Porter C.A."/>
            <person name="Baker R.J."/>
        </authorList>
    </citation>
    <scope>NUCLEOTIDE SEQUENCE [GENOMIC DNA]</scope>
</reference>
<name>CYB_VAMBR</name>